<sequence>MRIISWDVGVIYLAYCVLEYVLSKNKEVIINIIDWNIINLMENNRLVINCCGMKKGNTICDKKASYCLRTPDKKLFGYCKTHLTQYNINWSIQDTEKMFTKISKPDNTCTFLKKTGDFCGKKATYKYKNNKSTNYYCNVHYKSELKNRTKEFSPQPIKNTIVKKYPTAQLQYNLIKKLDKLSKHFAMLGIERVVIENQPSQKNPKMKSIASTLFDYFLIRGFCDKIHNIDIKLVRYMCPSNKLKVNKDNTLEVFKANKDSKKKYKLTKALGIQYTKQLLNNEQEQLDYLSLFEKKDDLCDAYLQGRYYLEFIMDKTDKNYPIIKCQENKFNKPNNDDLQNESGDDSETESSLSWENIKIEISDDQADYYAKKYNKSVMNKSNKLMMNKSMMNKSESNKKSNRKSNKRSNKNIITL</sequence>
<protein>
    <recommendedName>
        <fullName>Uncharacterized protein L451</fullName>
    </recommendedName>
</protein>
<evidence type="ECO:0000256" key="1">
    <source>
        <dbReference type="SAM" id="MobiDB-lite"/>
    </source>
</evidence>
<reference key="1">
    <citation type="journal article" date="2004" name="Science">
        <title>The 1.2-megabase genome sequence of Mimivirus.</title>
        <authorList>
            <person name="Raoult D."/>
            <person name="Audic S."/>
            <person name="Robert C."/>
            <person name="Abergel C."/>
            <person name="Renesto P."/>
            <person name="Ogata H."/>
            <person name="La Scola B."/>
            <person name="Susan M."/>
            <person name="Claverie J.-M."/>
        </authorList>
    </citation>
    <scope>NUCLEOTIDE SEQUENCE [LARGE SCALE GENOMIC DNA]</scope>
    <source>
        <strain>Rowbotham-Bradford</strain>
    </source>
</reference>
<organism>
    <name type="scientific">Acanthamoeba polyphaga mimivirus</name>
    <name type="common">APMV</name>
    <dbReference type="NCBI Taxonomy" id="212035"/>
    <lineage>
        <taxon>Viruses</taxon>
        <taxon>Varidnaviria</taxon>
        <taxon>Bamfordvirae</taxon>
        <taxon>Nucleocytoviricota</taxon>
        <taxon>Megaviricetes</taxon>
        <taxon>Imitervirales</taxon>
        <taxon>Mimiviridae</taxon>
        <taxon>Megamimivirinae</taxon>
        <taxon>Mimivirus</taxon>
        <taxon>Mimivirus bradfordmassiliense</taxon>
    </lineage>
</organism>
<proteinExistence type="predicted"/>
<gene>
    <name type="ordered locus">MIMI_L451</name>
</gene>
<dbReference type="EMBL" id="AY653733">
    <property type="protein sequence ID" value="AAV50717.1"/>
    <property type="molecule type" value="Genomic_DNA"/>
</dbReference>
<dbReference type="KEGG" id="vg:9925076"/>
<dbReference type="OrthoDB" id="21412at10239"/>
<dbReference type="Proteomes" id="UP000001134">
    <property type="component" value="Genome"/>
</dbReference>
<dbReference type="GO" id="GO:0003676">
    <property type="term" value="F:nucleic acid binding"/>
    <property type="evidence" value="ECO:0007669"/>
    <property type="project" value="InterPro"/>
</dbReference>
<dbReference type="Gene3D" id="3.30.420.10">
    <property type="entry name" value="Ribonuclease H-like superfamily/Ribonuclease H"/>
    <property type="match status" value="1"/>
</dbReference>
<dbReference type="InterPro" id="IPR012337">
    <property type="entry name" value="RNaseH-like_sf"/>
</dbReference>
<dbReference type="InterPro" id="IPR036397">
    <property type="entry name" value="RNaseH_sf"/>
</dbReference>
<dbReference type="SUPFAM" id="SSF53098">
    <property type="entry name" value="Ribonuclease H-like"/>
    <property type="match status" value="2"/>
</dbReference>
<keyword id="KW-1185">Reference proteome</keyword>
<organismHost>
    <name type="scientific">Acanthamoeba polyphaga</name>
    <name type="common">Amoeba</name>
    <dbReference type="NCBI Taxonomy" id="5757"/>
</organismHost>
<feature type="chain" id="PRO_0000253270" description="Uncharacterized protein L451">
    <location>
        <begin position="1"/>
        <end position="415"/>
    </location>
</feature>
<feature type="region of interest" description="Disordered" evidence="1">
    <location>
        <begin position="329"/>
        <end position="351"/>
    </location>
</feature>
<feature type="region of interest" description="Disordered" evidence="1">
    <location>
        <begin position="388"/>
        <end position="415"/>
    </location>
</feature>
<feature type="compositionally biased region" description="Acidic residues" evidence="1">
    <location>
        <begin position="338"/>
        <end position="348"/>
    </location>
</feature>
<feature type="compositionally biased region" description="Basic residues" evidence="1">
    <location>
        <begin position="399"/>
        <end position="409"/>
    </location>
</feature>
<name>YL451_MIMIV</name>
<accession>Q5UQQ1</accession>